<reference key="1">
    <citation type="journal article" date="2002" name="Plant Cell Physiol.">
        <title>Hd3a, a rice ortholog of the Arabidopsis FT gene, promotes transition to flowering downstream of Hd1 under short-day conditions.</title>
        <authorList>
            <person name="Kojima S."/>
            <person name="Takahashi Y."/>
            <person name="Kobayashi Y."/>
            <person name="Monna L."/>
            <person name="Sasaki T."/>
            <person name="Araki T."/>
            <person name="Yano M."/>
        </authorList>
    </citation>
    <scope>NUCLEOTIDE SEQUENCE [GENOMIC DNA / MRNA]</scope>
    <source>
        <strain>cv. Nipponbare</strain>
    </source>
</reference>
<reference key="2">
    <citation type="journal article" date="2008" name="Theor. Appl. Genet.">
        <title>Allelic diversification at the wx locus in landraces of Asian rice.</title>
        <authorList>
            <person name="Mikami I."/>
            <person name="Uwatoko N."/>
            <person name="Ikeda Y."/>
            <person name="Yamaguchi J."/>
            <person name="Hirano H.Y."/>
            <person name="Suzuki Y."/>
            <person name="Sano Y."/>
        </authorList>
    </citation>
    <scope>NUCLEOTIDE SEQUENCE [GENOMIC DNA]</scope>
    <source>
        <strain>cv. Taichung 65</strain>
    </source>
</reference>
<reference key="3">
    <citation type="journal article" date="2009" name="Mol. Ecol.">
        <title>Diversification in flowering time due to tandem FT-like gene duplication, generating novel Mendelian factors in wild and cultivated rice.</title>
        <authorList>
            <person name="Hagiwara W.E."/>
            <person name="Uwatoko N."/>
            <person name="Sasaki A."/>
            <person name="Matsubara K."/>
            <person name="Nagano H."/>
            <person name="Onishi K."/>
            <person name="Sano Y."/>
        </authorList>
    </citation>
    <scope>NUCLEOTIDE SEQUENCE [GENOMIC DNA]</scope>
    <source>
        <strain>cv. Taichung 65</strain>
    </source>
</reference>
<reference key="4">
    <citation type="journal article" date="2005" name="Nature">
        <title>The map-based sequence of the rice genome.</title>
        <authorList>
            <consortium name="International rice genome sequencing project (IRGSP)"/>
        </authorList>
    </citation>
    <scope>NUCLEOTIDE SEQUENCE [LARGE SCALE GENOMIC DNA]</scope>
    <source>
        <strain>cv. Nipponbare</strain>
    </source>
</reference>
<reference key="5">
    <citation type="journal article" date="2008" name="Nucleic Acids Res.">
        <title>The rice annotation project database (RAP-DB): 2008 update.</title>
        <authorList>
            <consortium name="The rice annotation project (RAP)"/>
        </authorList>
    </citation>
    <scope>GENOME REANNOTATION</scope>
    <source>
        <strain>cv. Nipponbare</strain>
    </source>
</reference>
<reference key="6">
    <citation type="journal article" date="2013" name="Rice">
        <title>Improvement of the Oryza sativa Nipponbare reference genome using next generation sequence and optical map data.</title>
        <authorList>
            <person name="Kawahara Y."/>
            <person name="de la Bastide M."/>
            <person name="Hamilton J.P."/>
            <person name="Kanamori H."/>
            <person name="McCombie W.R."/>
            <person name="Ouyang S."/>
            <person name="Schwartz D.C."/>
            <person name="Tanaka T."/>
            <person name="Wu J."/>
            <person name="Zhou S."/>
            <person name="Childs K.L."/>
            <person name="Davidson R.M."/>
            <person name="Lin H."/>
            <person name="Quesada-Ocampo L."/>
            <person name="Vaillancourt B."/>
            <person name="Sakai H."/>
            <person name="Lee S.S."/>
            <person name="Kim J."/>
            <person name="Numa H."/>
            <person name="Itoh T."/>
            <person name="Buell C.R."/>
            <person name="Matsumoto T."/>
        </authorList>
    </citation>
    <scope>GENOME REANNOTATION</scope>
    <source>
        <strain>cv. Nipponbare</strain>
    </source>
</reference>
<reference key="7">
    <citation type="journal article" date="2005" name="PLoS Biol.">
        <title>The genomes of Oryza sativa: a history of duplications.</title>
        <authorList>
            <person name="Yu J."/>
            <person name="Wang J."/>
            <person name="Lin W."/>
            <person name="Li S."/>
            <person name="Li H."/>
            <person name="Zhou J."/>
            <person name="Ni P."/>
            <person name="Dong W."/>
            <person name="Hu S."/>
            <person name="Zeng C."/>
            <person name="Zhang J."/>
            <person name="Zhang Y."/>
            <person name="Li R."/>
            <person name="Xu Z."/>
            <person name="Li S."/>
            <person name="Li X."/>
            <person name="Zheng H."/>
            <person name="Cong L."/>
            <person name="Lin L."/>
            <person name="Yin J."/>
            <person name="Geng J."/>
            <person name="Li G."/>
            <person name="Shi J."/>
            <person name="Liu J."/>
            <person name="Lv H."/>
            <person name="Li J."/>
            <person name="Wang J."/>
            <person name="Deng Y."/>
            <person name="Ran L."/>
            <person name="Shi X."/>
            <person name="Wang X."/>
            <person name="Wu Q."/>
            <person name="Li C."/>
            <person name="Ren X."/>
            <person name="Wang J."/>
            <person name="Wang X."/>
            <person name="Li D."/>
            <person name="Liu D."/>
            <person name="Zhang X."/>
            <person name="Ji Z."/>
            <person name="Zhao W."/>
            <person name="Sun Y."/>
            <person name="Zhang Z."/>
            <person name="Bao J."/>
            <person name="Han Y."/>
            <person name="Dong L."/>
            <person name="Ji J."/>
            <person name="Chen P."/>
            <person name="Wu S."/>
            <person name="Liu J."/>
            <person name="Xiao Y."/>
            <person name="Bu D."/>
            <person name="Tan J."/>
            <person name="Yang L."/>
            <person name="Ye C."/>
            <person name="Zhang J."/>
            <person name="Xu J."/>
            <person name="Zhou Y."/>
            <person name="Yu Y."/>
            <person name="Zhang B."/>
            <person name="Zhuang S."/>
            <person name="Wei H."/>
            <person name="Liu B."/>
            <person name="Lei M."/>
            <person name="Yu H."/>
            <person name="Li Y."/>
            <person name="Xu H."/>
            <person name="Wei S."/>
            <person name="He X."/>
            <person name="Fang L."/>
            <person name="Zhang Z."/>
            <person name="Zhang Y."/>
            <person name="Huang X."/>
            <person name="Su Z."/>
            <person name="Tong W."/>
            <person name="Li J."/>
            <person name="Tong Z."/>
            <person name="Li S."/>
            <person name="Ye J."/>
            <person name="Wang L."/>
            <person name="Fang L."/>
            <person name="Lei T."/>
            <person name="Chen C.-S."/>
            <person name="Chen H.-C."/>
            <person name="Xu Z."/>
            <person name="Li H."/>
            <person name="Huang H."/>
            <person name="Zhang F."/>
            <person name="Xu H."/>
            <person name="Li N."/>
            <person name="Zhao C."/>
            <person name="Li S."/>
            <person name="Dong L."/>
            <person name="Huang Y."/>
            <person name="Li L."/>
            <person name="Xi Y."/>
            <person name="Qi Q."/>
            <person name="Li W."/>
            <person name="Zhang B."/>
            <person name="Hu W."/>
            <person name="Zhang Y."/>
            <person name="Tian X."/>
            <person name="Jiao Y."/>
            <person name="Liang X."/>
            <person name="Jin J."/>
            <person name="Gao L."/>
            <person name="Zheng W."/>
            <person name="Hao B."/>
            <person name="Liu S.-M."/>
            <person name="Wang W."/>
            <person name="Yuan L."/>
            <person name="Cao M."/>
            <person name="McDermott J."/>
            <person name="Samudrala R."/>
            <person name="Wang J."/>
            <person name="Wong G.K.-S."/>
            <person name="Yang H."/>
        </authorList>
    </citation>
    <scope>NUCLEOTIDE SEQUENCE [LARGE SCALE GENOMIC DNA]</scope>
    <source>
        <strain>cv. Nipponbare</strain>
    </source>
</reference>
<reference key="8">
    <citation type="journal article" date="2008" name="Development">
        <title>Hd3a and RFT1 are essential for flowering in rice.</title>
        <authorList>
            <person name="Komiya R."/>
            <person name="Ikegami A."/>
            <person name="Tamaki S."/>
            <person name="Yokoi S."/>
            <person name="Shimamoto K."/>
        </authorList>
    </citation>
    <scope>FUNCTION</scope>
    <scope>TISSUE SPECIFICITY</scope>
    <scope>INDUCTION</scope>
</reference>
<reference key="9">
    <citation type="journal article" date="2009" name="Development">
        <title>A gene network for long-day flowering activates RFT1 encoding a mobile flowering signal in rice.</title>
        <authorList>
            <person name="Komiya R."/>
            <person name="Yokoi S."/>
            <person name="Shimamoto K."/>
        </authorList>
    </citation>
    <scope>FUNCTION</scope>
    <scope>INDUCTION</scope>
</reference>
<reference key="10">
    <citation type="journal article" date="2017" name="Plant Cell">
        <title>OsFTIP1-mediated regulation of florigen transport in rice is negatively regulated by the ubiquitin-like domain kinase OsUbDKgamma4.</title>
        <authorList>
            <person name="Song S."/>
            <person name="Chen Y."/>
            <person name="Liu L."/>
            <person name="Wang Y."/>
            <person name="Bao S."/>
            <person name="Zhou X."/>
            <person name="Teo Z.W."/>
            <person name="Mao C."/>
            <person name="Gan Y."/>
            <person name="Yu H."/>
        </authorList>
    </citation>
    <scope>FUNCTION</scope>
    <scope>INTERACTION WITH FTIP1</scope>
    <scope>SUBCELLULAR LOCATION</scope>
    <scope>TISSUE SPECIFICITY</scope>
</reference>
<name>RFT1_ORYSJ</name>
<comment type="function">
    <text evidence="1 2 3">Probable mobile flower-promoting signal (florigen) that moves from the leaf to the shoot apical meristem (SAM) and induces flowering. Promotes the transition from vegetative growth to flowering under long day (LD) conditions. Acts upstream of MADS14 and MADS15. May also participate in the promotion of flowering under short day (SD) conditions.</text>
</comment>
<comment type="subunit">
    <text evidence="3">Interacts with FTIP1.</text>
</comment>
<comment type="subcellular location">
    <subcellularLocation>
        <location evidence="5">Cytoplasm</location>
    </subcellularLocation>
    <subcellularLocation>
        <location evidence="3">Nucleus</location>
    </subcellularLocation>
    <subcellularLocation>
        <location evidence="3">Endoplasmic reticulum</location>
    </subcellularLocation>
</comment>
<comment type="tissue specificity">
    <text evidence="1 3">Expressed in leaf vascular tissues (PubMed:18223202). Specifically expressed in the phloem including companion cells (PubMed:28254780).</text>
</comment>
<comment type="induction">
    <text evidence="1 2">Expressed with a circadian rhythm showing a peak at dawn and then decreasing to reach the lowest levels early in the night in SD conditions.</text>
</comment>
<comment type="similarity">
    <text evidence="5">Belongs to the phosphatidylethanolamine-binding protein family.</text>
</comment>
<sequence>MAGSGRDDPLVVGRIVGDVLDPFVRITNLSVSYGARIVSNGCELKPSMVTQQPRVVVGGNDMRTFYTLVMVDPDAPSPSNPNLREYLHWLVTDIPGTTGATFGQEVMCYESPRPTMGIHRLVFVLFQQLGRQTVYAPGWRQNFSTRNFAELYNLGSPVATVYFNCQREAGSGGRRVYP</sequence>
<keyword id="KW-0963">Cytoplasm</keyword>
<keyword id="KW-0217">Developmental protein</keyword>
<keyword id="KW-0221">Differentiation</keyword>
<keyword id="KW-0256">Endoplasmic reticulum</keyword>
<keyword id="KW-0287">Flowering</keyword>
<keyword id="KW-0539">Nucleus</keyword>
<keyword id="KW-1185">Reference proteome</keyword>
<organism>
    <name type="scientific">Oryza sativa subsp. japonica</name>
    <name type="common">Rice</name>
    <dbReference type="NCBI Taxonomy" id="39947"/>
    <lineage>
        <taxon>Eukaryota</taxon>
        <taxon>Viridiplantae</taxon>
        <taxon>Streptophyta</taxon>
        <taxon>Embryophyta</taxon>
        <taxon>Tracheophyta</taxon>
        <taxon>Spermatophyta</taxon>
        <taxon>Magnoliopsida</taxon>
        <taxon>Liliopsida</taxon>
        <taxon>Poales</taxon>
        <taxon>Poaceae</taxon>
        <taxon>BOP clade</taxon>
        <taxon>Oryzoideae</taxon>
        <taxon>Oryzeae</taxon>
        <taxon>Oryzinae</taxon>
        <taxon>Oryza</taxon>
        <taxon>Oryza sativa</taxon>
    </lineage>
</organism>
<feature type="chain" id="PRO_0000395305" description="Protein RICE FLOWERING LOCUS T 1">
    <location>
        <begin position="1"/>
        <end position="178"/>
    </location>
</feature>
<feature type="sequence conflict" description="In Ref. 3; BAH30237." evidence="5" ref="3">
    <original>P</original>
    <variation>S</variation>
    <location>
        <position position="95"/>
    </location>
</feature>
<gene>
    <name evidence="4" type="primary">RFT1</name>
    <name evidence="5" type="synonym">FTL3</name>
    <name type="ordered locus">Os06g0157500</name>
    <name type="ordered locus">LOC_Os06g06300</name>
    <name type="ORF">OsJ_20189</name>
    <name type="ORF">P0046E09.26</name>
    <name type="ORF">P0702F05.6</name>
</gene>
<accession>Q8VWH2</accession>
<accession>C0SSC5</accession>
<accession>Q8H2G4</accession>
<evidence type="ECO:0000269" key="1">
    <source>
    </source>
</evidence>
<evidence type="ECO:0000269" key="2">
    <source>
    </source>
</evidence>
<evidence type="ECO:0000269" key="3">
    <source>
    </source>
</evidence>
<evidence type="ECO:0000303" key="4">
    <source>
    </source>
</evidence>
<evidence type="ECO:0000305" key="5"/>
<protein>
    <recommendedName>
        <fullName evidence="5">Protein RICE FLOWERING LOCUS T 1</fullName>
    </recommendedName>
    <alternativeName>
        <fullName evidence="5">FLOWERING LOCUS T-like protein 3</fullName>
        <shortName evidence="5">FT-like protein 3</shortName>
        <shortName>OsFTL3</shortName>
    </alternativeName>
</protein>
<proteinExistence type="evidence at protein level"/>
<dbReference type="EMBL" id="AB062675">
    <property type="protein sequence ID" value="BAB78479.1"/>
    <property type="molecule type" value="Genomic_DNA"/>
</dbReference>
<dbReference type="EMBL" id="AB062676">
    <property type="protein sequence ID" value="BAB78480.1"/>
    <property type="molecule type" value="mRNA"/>
</dbReference>
<dbReference type="EMBL" id="AB281474">
    <property type="protein sequence ID" value="BAF92712.1"/>
    <property type="molecule type" value="Genomic_DNA"/>
</dbReference>
<dbReference type="EMBL" id="AB426873">
    <property type="protein sequence ID" value="BAH30237.1"/>
    <property type="molecule type" value="Genomic_DNA"/>
</dbReference>
<dbReference type="EMBL" id="AP005828">
    <property type="protein sequence ID" value="BAC21277.1"/>
    <property type="molecule type" value="Genomic_DNA"/>
</dbReference>
<dbReference type="EMBL" id="AP007223">
    <property type="protein sequence ID" value="BAD69428.1"/>
    <property type="molecule type" value="Genomic_DNA"/>
</dbReference>
<dbReference type="EMBL" id="AP008212">
    <property type="protein sequence ID" value="BAF18773.1"/>
    <property type="molecule type" value="Genomic_DNA"/>
</dbReference>
<dbReference type="EMBL" id="AP014962">
    <property type="protein sequence ID" value="BAS96251.1"/>
    <property type="molecule type" value="Genomic_DNA"/>
</dbReference>
<dbReference type="EMBL" id="CM000143">
    <property type="protein sequence ID" value="EAZ35887.1"/>
    <property type="molecule type" value="Genomic_DNA"/>
</dbReference>
<dbReference type="RefSeq" id="XP_015642519.1">
    <property type="nucleotide sequence ID" value="XM_015787033.1"/>
</dbReference>
<dbReference type="SMR" id="Q8VWH2"/>
<dbReference type="FunCoup" id="Q8VWH2">
    <property type="interactions" value="1118"/>
</dbReference>
<dbReference type="STRING" id="39947.Q8VWH2"/>
<dbReference type="PaxDb" id="39947-Q8VWH2"/>
<dbReference type="EnsemblPlants" id="Os06t0157500-01">
    <property type="protein sequence ID" value="Os06t0157500-01"/>
    <property type="gene ID" value="Os06g0157500"/>
</dbReference>
<dbReference type="Gramene" id="Os06t0157500-01">
    <property type="protein sequence ID" value="Os06t0157500-01"/>
    <property type="gene ID" value="Os06g0157500"/>
</dbReference>
<dbReference type="KEGG" id="dosa:Os06g0157500"/>
<dbReference type="eggNOG" id="KOG3346">
    <property type="taxonomic scope" value="Eukaryota"/>
</dbReference>
<dbReference type="HOGENOM" id="CLU_043994_6_1_1"/>
<dbReference type="InParanoid" id="Q8VWH2"/>
<dbReference type="OMA" id="QEVICYE"/>
<dbReference type="OrthoDB" id="2506647at2759"/>
<dbReference type="PlantReactome" id="R-OSA-8934036">
    <property type="pathway name" value="Long day regulated expression of florigens"/>
</dbReference>
<dbReference type="PlantReactome" id="R-OSA-8934108">
    <property type="pathway name" value="Short day regulated expression of florigens"/>
</dbReference>
<dbReference type="Proteomes" id="UP000000763">
    <property type="component" value="Chromosome 6"/>
</dbReference>
<dbReference type="Proteomes" id="UP000007752">
    <property type="component" value="Chromosome 6"/>
</dbReference>
<dbReference type="Proteomes" id="UP000059680">
    <property type="component" value="Chromosome 6"/>
</dbReference>
<dbReference type="ExpressionAtlas" id="Q8VWH2">
    <property type="expression patterns" value="baseline and differential"/>
</dbReference>
<dbReference type="GO" id="GO:0005783">
    <property type="term" value="C:endoplasmic reticulum"/>
    <property type="evidence" value="ECO:0007669"/>
    <property type="project" value="UniProtKB-SubCell"/>
</dbReference>
<dbReference type="GO" id="GO:0005634">
    <property type="term" value="C:nucleus"/>
    <property type="evidence" value="ECO:0007669"/>
    <property type="project" value="UniProtKB-SubCell"/>
</dbReference>
<dbReference type="GO" id="GO:0030154">
    <property type="term" value="P:cell differentiation"/>
    <property type="evidence" value="ECO:0007669"/>
    <property type="project" value="UniProtKB-KW"/>
</dbReference>
<dbReference type="GO" id="GO:0009908">
    <property type="term" value="P:flower development"/>
    <property type="evidence" value="ECO:0007669"/>
    <property type="project" value="UniProtKB-KW"/>
</dbReference>
<dbReference type="GO" id="GO:0010229">
    <property type="term" value="P:inflorescence development"/>
    <property type="evidence" value="ECO:0000315"/>
    <property type="project" value="UniProtKB"/>
</dbReference>
<dbReference type="GO" id="GO:0048573">
    <property type="term" value="P:photoperiodism, flowering"/>
    <property type="evidence" value="ECO:0000315"/>
    <property type="project" value="UniProtKB"/>
</dbReference>
<dbReference type="GO" id="GO:0009909">
    <property type="term" value="P:regulation of flower development"/>
    <property type="evidence" value="ECO:0000315"/>
    <property type="project" value="UniProtKB"/>
</dbReference>
<dbReference type="GO" id="GO:0048510">
    <property type="term" value="P:regulation of timing of transition from vegetative to reproductive phase"/>
    <property type="evidence" value="ECO:0000315"/>
    <property type="project" value="UniProtKB"/>
</dbReference>
<dbReference type="GO" id="GO:0010228">
    <property type="term" value="P:vegetative to reproductive phase transition of meristem"/>
    <property type="evidence" value="ECO:0000318"/>
    <property type="project" value="GO_Central"/>
</dbReference>
<dbReference type="CDD" id="cd00866">
    <property type="entry name" value="PEBP_euk"/>
    <property type="match status" value="1"/>
</dbReference>
<dbReference type="FunFam" id="3.90.280.10:FF:000001">
    <property type="entry name" value="Terminal flower 1"/>
    <property type="match status" value="1"/>
</dbReference>
<dbReference type="Gene3D" id="3.90.280.10">
    <property type="entry name" value="PEBP-like"/>
    <property type="match status" value="1"/>
</dbReference>
<dbReference type="InterPro" id="IPR008914">
    <property type="entry name" value="PEBP"/>
</dbReference>
<dbReference type="InterPro" id="IPR036610">
    <property type="entry name" value="PEBP-like_sf"/>
</dbReference>
<dbReference type="InterPro" id="IPR035810">
    <property type="entry name" value="PEBP_euk"/>
</dbReference>
<dbReference type="InterPro" id="IPR001858">
    <property type="entry name" value="Phosphatidylethanolamine-bd_CS"/>
</dbReference>
<dbReference type="PANTHER" id="PTHR11362">
    <property type="entry name" value="PHOSPHATIDYLETHANOLAMINE-BINDING PROTEIN"/>
    <property type="match status" value="1"/>
</dbReference>
<dbReference type="PANTHER" id="PTHR11362:SF9">
    <property type="entry name" value="PROTEIN FLOWERING LOCUS T-RELATED"/>
    <property type="match status" value="1"/>
</dbReference>
<dbReference type="Pfam" id="PF01161">
    <property type="entry name" value="PBP"/>
    <property type="match status" value="1"/>
</dbReference>
<dbReference type="SUPFAM" id="SSF49777">
    <property type="entry name" value="PEBP-like"/>
    <property type="match status" value="1"/>
</dbReference>
<dbReference type="PROSITE" id="PS01220">
    <property type="entry name" value="PBP"/>
    <property type="match status" value="1"/>
</dbReference>